<dbReference type="EMBL" id="D16554">
    <property type="protein sequence ID" value="BAA03983.1"/>
    <property type="molecule type" value="mRNA"/>
</dbReference>
<dbReference type="EMBL" id="BC060312">
    <property type="protein sequence ID" value="AAH60312.1"/>
    <property type="molecule type" value="mRNA"/>
</dbReference>
<dbReference type="EMBL" id="BC070919">
    <property type="protein sequence ID" value="AAH70919.1"/>
    <property type="molecule type" value="mRNA"/>
</dbReference>
<dbReference type="RefSeq" id="NP_001396021.1">
    <property type="nucleotide sequence ID" value="NM_001409092.1"/>
</dbReference>
<dbReference type="RefSeq" id="NP_620250.3">
    <property type="nucleotide sequence ID" value="NM_138895.3"/>
</dbReference>
<dbReference type="SMR" id="P0CG51"/>
<dbReference type="BioGRID" id="251381">
    <property type="interactions" value="4"/>
</dbReference>
<dbReference type="CORUM" id="P0CG51"/>
<dbReference type="FunCoup" id="P0CG51">
    <property type="interactions" value="853"/>
</dbReference>
<dbReference type="IntAct" id="P0CG51">
    <property type="interactions" value="1"/>
</dbReference>
<dbReference type="MINT" id="P0CG51"/>
<dbReference type="iPTMnet" id="P0CG51"/>
<dbReference type="PhosphoSitePlus" id="P0CG51"/>
<dbReference type="jPOST" id="P0CG51"/>
<dbReference type="GeneID" id="192255"/>
<dbReference type="KEGG" id="rno:192255"/>
<dbReference type="AGR" id="RGD:621562"/>
<dbReference type="CTD" id="7314"/>
<dbReference type="RGD" id="621562">
    <property type="gene designation" value="Ubb"/>
</dbReference>
<dbReference type="InParanoid" id="P0CG51"/>
<dbReference type="Reactome" id="R-RNO-110312">
    <property type="pathway name" value="Translesion synthesis by REV1"/>
</dbReference>
<dbReference type="Reactome" id="R-RNO-110314">
    <property type="pathway name" value="Recognition of DNA damage by PCNA-containing replication complex"/>
</dbReference>
<dbReference type="Reactome" id="R-RNO-110320">
    <property type="pathway name" value="Translesion Synthesis by POLH"/>
</dbReference>
<dbReference type="Reactome" id="R-RNO-1169091">
    <property type="pathway name" value="Activation of NF-kappaB in B cells"/>
</dbReference>
<dbReference type="Reactome" id="R-RNO-1234176">
    <property type="pathway name" value="Oxygen-dependent proline hydroxylation of Hypoxia-inducible Factor Alpha"/>
</dbReference>
<dbReference type="Reactome" id="R-RNO-1253288">
    <property type="pathway name" value="Downregulation of ERBB4 signaling"/>
</dbReference>
<dbReference type="Reactome" id="R-RNO-1295596">
    <property type="pathway name" value="Spry regulation of FGF signaling"/>
</dbReference>
<dbReference type="Reactome" id="R-RNO-1358803">
    <property type="pathway name" value="Downregulation of ERBB2:ERBB3 signaling"/>
</dbReference>
<dbReference type="Reactome" id="R-RNO-168638">
    <property type="pathway name" value="NOD1/2 Signaling Pathway"/>
</dbReference>
<dbReference type="Reactome" id="R-RNO-174048">
    <property type="pathway name" value="APC/C:Cdc20 mediated degradation of Cyclin B"/>
</dbReference>
<dbReference type="Reactome" id="R-RNO-174084">
    <property type="pathway name" value="Autodegradation of Cdh1 by Cdh1:APC/C"/>
</dbReference>
<dbReference type="Reactome" id="R-RNO-174113">
    <property type="pathway name" value="SCF-beta-TrCP mediated degradation of Emi1"/>
</dbReference>
<dbReference type="Reactome" id="R-RNO-174154">
    <property type="pathway name" value="APC/C:Cdc20 mediated degradation of Securin"/>
</dbReference>
<dbReference type="Reactome" id="R-RNO-174178">
    <property type="pathway name" value="APC/C:Cdh1 mediated degradation of Cdc20 and other APC/C:Cdh1 targeted proteins in late mitosis/early G1"/>
</dbReference>
<dbReference type="Reactome" id="R-RNO-174184">
    <property type="pathway name" value="Cdc20:Phospho-APC/C mediated degradation of Cyclin A"/>
</dbReference>
<dbReference type="Reactome" id="R-RNO-179409">
    <property type="pathway name" value="APC-Cdc20 mediated degradation of Nek2A"/>
</dbReference>
<dbReference type="Reactome" id="R-RNO-182971">
    <property type="pathway name" value="EGFR downregulation"/>
</dbReference>
<dbReference type="Reactome" id="R-RNO-187577">
    <property type="pathway name" value="SCF(Skp2)-mediated degradation of p27/p21"/>
</dbReference>
<dbReference type="Reactome" id="R-RNO-195253">
    <property type="pathway name" value="Degradation of beta-catenin by the destruction complex"/>
</dbReference>
<dbReference type="Reactome" id="R-RNO-201681">
    <property type="pathway name" value="TCF dependent signaling in response to WNT"/>
</dbReference>
<dbReference type="Reactome" id="R-RNO-205043">
    <property type="pathway name" value="NRIF signals cell death from the nucleus"/>
</dbReference>
<dbReference type="Reactome" id="R-RNO-209543">
    <property type="pathway name" value="p75NTR recruits signalling complexes"/>
</dbReference>
<dbReference type="Reactome" id="R-RNO-209560">
    <property type="pathway name" value="NF-kB is activated and signals survival"/>
</dbReference>
<dbReference type="Reactome" id="R-RNO-2122948">
    <property type="pathway name" value="Activated NOTCH1 Transmits Signal to the Nucleus"/>
</dbReference>
<dbReference type="Reactome" id="R-RNO-2173788">
    <property type="pathway name" value="Downregulation of TGF-beta receptor signaling"/>
</dbReference>
<dbReference type="Reactome" id="R-RNO-2173791">
    <property type="pathway name" value="TGF-beta receptor signaling in EMT (epithelial to mesenchymal transition)"/>
</dbReference>
<dbReference type="Reactome" id="R-RNO-2173795">
    <property type="pathway name" value="Downregulation of SMAD2/3:SMAD4 transcriptional activity"/>
</dbReference>
<dbReference type="Reactome" id="R-RNO-2173796">
    <property type="pathway name" value="SMAD2/SMAD3:SMAD4 heterotrimer regulates transcription"/>
</dbReference>
<dbReference type="Reactome" id="R-RNO-2467813">
    <property type="pathway name" value="Separation of Sister Chromatids"/>
</dbReference>
<dbReference type="Reactome" id="R-RNO-2559580">
    <property type="pathway name" value="Oxidative Stress Induced Senescence"/>
</dbReference>
<dbReference type="Reactome" id="R-RNO-2559582">
    <property type="pathway name" value="Senescence-Associated Secretory Phenotype (SASP)"/>
</dbReference>
<dbReference type="Reactome" id="R-RNO-2559585">
    <property type="pathway name" value="Oncogene Induced Senescence"/>
</dbReference>
<dbReference type="Reactome" id="R-RNO-2565942">
    <property type="pathway name" value="Regulation of PLK1 Activity at G2/M Transition"/>
</dbReference>
<dbReference type="Reactome" id="R-RNO-2672351">
    <property type="pathway name" value="Stimuli-sensing channels"/>
</dbReference>
<dbReference type="Reactome" id="R-RNO-3134975">
    <property type="pathway name" value="Regulation of innate immune responses to cytosolic DNA"/>
</dbReference>
<dbReference type="Reactome" id="R-RNO-349425">
    <property type="pathway name" value="Autodegradation of the E3 ubiquitin ligase COP1"/>
</dbReference>
<dbReference type="Reactome" id="R-RNO-3769402">
    <property type="pathway name" value="Deactivation of the beta-catenin transactivating complex"/>
</dbReference>
<dbReference type="Reactome" id="R-RNO-382556">
    <property type="pathway name" value="ABC-family proteins mediated transport"/>
</dbReference>
<dbReference type="Reactome" id="R-RNO-450302">
    <property type="pathway name" value="activated TAK1 mediates p38 MAPK activation"/>
</dbReference>
<dbReference type="Reactome" id="R-RNO-450321">
    <property type="pathway name" value="JNK (c-Jun kinases) phosphorylation and activation mediated by activated human TAK1"/>
</dbReference>
<dbReference type="Reactome" id="R-RNO-450408">
    <property type="pathway name" value="AUF1 (hnRNP D0) binds and destabilizes mRNA"/>
</dbReference>
<dbReference type="Reactome" id="R-RNO-4608870">
    <property type="pathway name" value="Asymmetric localization of PCP proteins"/>
</dbReference>
<dbReference type="Reactome" id="R-RNO-4641257">
    <property type="pathway name" value="Degradation of AXIN"/>
</dbReference>
<dbReference type="Reactome" id="R-RNO-4641258">
    <property type="pathway name" value="Degradation of DVL"/>
</dbReference>
<dbReference type="Reactome" id="R-RNO-4641263">
    <property type="pathway name" value="Regulation of FZD by ubiquitination"/>
</dbReference>
<dbReference type="Reactome" id="R-RNO-532668">
    <property type="pathway name" value="N-glycan trimming in the ER and Calnexin/Calreticulin cycle"/>
</dbReference>
<dbReference type="Reactome" id="R-RNO-5357905">
    <property type="pathway name" value="Regulation of TNFR1 signaling"/>
</dbReference>
<dbReference type="Reactome" id="R-RNO-5357956">
    <property type="pathway name" value="TNFR1-induced NF-kappa-B signaling pathway"/>
</dbReference>
<dbReference type="Reactome" id="R-RNO-5358346">
    <property type="pathway name" value="Hedgehog ligand biogenesis"/>
</dbReference>
<dbReference type="Reactome" id="R-RNO-5607761">
    <property type="pathway name" value="Dectin-1 mediated noncanonical NF-kB signaling"/>
</dbReference>
<dbReference type="Reactome" id="R-RNO-5610780">
    <property type="pathway name" value="Degradation of GLI1 by the proteasome"/>
</dbReference>
<dbReference type="Reactome" id="R-RNO-5610785">
    <property type="pathway name" value="GLI3 is processed to GLI3R by the proteasome"/>
</dbReference>
<dbReference type="Reactome" id="R-RNO-5632684">
    <property type="pathway name" value="Hedgehog 'on' state"/>
</dbReference>
<dbReference type="Reactome" id="R-RNO-5654726">
    <property type="pathway name" value="Negative regulation of FGFR1 signaling"/>
</dbReference>
<dbReference type="Reactome" id="R-RNO-5654727">
    <property type="pathway name" value="Negative regulation of FGFR2 signaling"/>
</dbReference>
<dbReference type="Reactome" id="R-RNO-5654732">
    <property type="pathway name" value="Negative regulation of FGFR3 signaling"/>
</dbReference>
<dbReference type="Reactome" id="R-RNO-5654733">
    <property type="pathway name" value="Negative regulation of FGFR4 signaling"/>
</dbReference>
<dbReference type="Reactome" id="R-RNO-5655862">
    <property type="pathway name" value="Translesion synthesis by POLK"/>
</dbReference>
<dbReference type="Reactome" id="R-RNO-5656121">
    <property type="pathway name" value="Translesion synthesis by POLI"/>
</dbReference>
<dbReference type="Reactome" id="R-RNO-5656169">
    <property type="pathway name" value="Termination of translesion DNA synthesis"/>
</dbReference>
<dbReference type="Reactome" id="R-RNO-5658442">
    <property type="pathway name" value="Regulation of RAS by GAPs"/>
</dbReference>
<dbReference type="Reactome" id="R-RNO-5668541">
    <property type="pathway name" value="TNFR2 non-canonical NF-kB pathway"/>
</dbReference>
<dbReference type="Reactome" id="R-RNO-5675221">
    <property type="pathway name" value="Negative regulation of MAPK pathway"/>
</dbReference>
<dbReference type="Reactome" id="R-RNO-5675482">
    <property type="pathway name" value="Regulation of necroptotic cell death"/>
</dbReference>
<dbReference type="Reactome" id="R-RNO-5676590">
    <property type="pathway name" value="NIK--&gt;noncanonical NF-kB signaling"/>
</dbReference>
<dbReference type="Reactome" id="R-RNO-5685942">
    <property type="pathway name" value="HDR through Homologous Recombination (HRR)"/>
</dbReference>
<dbReference type="Reactome" id="R-RNO-5687128">
    <property type="pathway name" value="MAPK6/MAPK4 signaling"/>
</dbReference>
<dbReference type="Reactome" id="R-RNO-5689603">
    <property type="pathway name" value="UCH proteinases"/>
</dbReference>
<dbReference type="Reactome" id="R-RNO-5689877">
    <property type="pathway name" value="Josephin domain DUBs"/>
</dbReference>
<dbReference type="Reactome" id="R-RNO-5689880">
    <property type="pathway name" value="Ub-specific processing proteases"/>
</dbReference>
<dbReference type="Reactome" id="R-RNO-5689896">
    <property type="pathway name" value="Ovarian tumor domain proteases"/>
</dbReference>
<dbReference type="Reactome" id="R-RNO-5689901">
    <property type="pathway name" value="Metalloprotease DUBs"/>
</dbReference>
<dbReference type="Reactome" id="R-RNO-5693565">
    <property type="pathway name" value="Recruitment and ATM-mediated phosphorylation of repair and signaling proteins at DNA double strand breaks"/>
</dbReference>
<dbReference type="Reactome" id="R-RNO-5696394">
    <property type="pathway name" value="DNA Damage Recognition in GG-NER"/>
</dbReference>
<dbReference type="Reactome" id="R-RNO-5696395">
    <property type="pathway name" value="Formation of Incision Complex in GG-NER"/>
</dbReference>
<dbReference type="Reactome" id="R-RNO-5696397">
    <property type="pathway name" value="Gap-filling DNA repair synthesis and ligation in GG-NER"/>
</dbReference>
<dbReference type="Reactome" id="R-RNO-5696400">
    <property type="pathway name" value="Dual Incision in GG-NER"/>
</dbReference>
<dbReference type="Reactome" id="R-RNO-6781823">
    <property type="pathway name" value="Formation of TC-NER Pre-Incision Complex"/>
</dbReference>
<dbReference type="Reactome" id="R-RNO-6782135">
    <property type="pathway name" value="Dual incision in TC-NER"/>
</dbReference>
<dbReference type="Reactome" id="R-RNO-6782210">
    <property type="pathway name" value="Gap-filling DNA repair synthesis and ligation in TC-NER"/>
</dbReference>
<dbReference type="Reactome" id="R-RNO-6783310">
    <property type="pathway name" value="Fanconi Anemia Pathway"/>
</dbReference>
<dbReference type="Reactome" id="R-RNO-6804756">
    <property type="pathway name" value="Regulation of TP53 Activity through Phosphorylation"/>
</dbReference>
<dbReference type="Reactome" id="R-RNO-6804757">
    <property type="pathway name" value="Regulation of TP53 Degradation"/>
</dbReference>
<dbReference type="Reactome" id="R-RNO-6804760">
    <property type="pathway name" value="Regulation of TP53 Activity through Methylation"/>
</dbReference>
<dbReference type="Reactome" id="R-RNO-6807004">
    <property type="pathway name" value="Negative regulation of MET activity"/>
</dbReference>
<dbReference type="Reactome" id="R-RNO-68867">
    <property type="pathway name" value="Assembly of the pre-replicative complex"/>
</dbReference>
<dbReference type="Reactome" id="R-RNO-68949">
    <property type="pathway name" value="Orc1 removal from chromatin"/>
</dbReference>
<dbReference type="Reactome" id="R-RNO-69017">
    <property type="pathway name" value="CDK-mediated phosphorylation and removal of Cdc6"/>
</dbReference>
<dbReference type="Reactome" id="R-RNO-69231">
    <property type="pathway name" value="Cyclin D associated events in G1"/>
</dbReference>
<dbReference type="Reactome" id="R-RNO-69481">
    <property type="pathway name" value="G2/M Checkpoints"/>
</dbReference>
<dbReference type="Reactome" id="R-RNO-69541">
    <property type="pathway name" value="Stabilization of p53"/>
</dbReference>
<dbReference type="Reactome" id="R-RNO-69601">
    <property type="pathway name" value="Ubiquitin Mediated Degradation of Phosphorylated Cdc25A"/>
</dbReference>
<dbReference type="Reactome" id="R-RNO-75815">
    <property type="pathway name" value="Ubiquitin-dependent degradation of Cyclin D"/>
</dbReference>
<dbReference type="Reactome" id="R-RNO-8849469">
    <property type="pathway name" value="PTK6 Regulates RTKs and Their Effectors AKT1 and DOK1"/>
</dbReference>
<dbReference type="Reactome" id="R-RNO-8852276">
    <property type="pathway name" value="The role of GTSE1 in G2/M progression after G2 checkpoint"/>
</dbReference>
<dbReference type="Reactome" id="R-RNO-8854050">
    <property type="pathway name" value="FBXL7 down-regulates AURKA during mitotic entry and in early mitosis"/>
</dbReference>
<dbReference type="Reactome" id="R-RNO-8856825">
    <property type="pathway name" value="Cargo recognition for clathrin-mediated endocytosis"/>
</dbReference>
<dbReference type="Reactome" id="R-RNO-8856828">
    <property type="pathway name" value="Clathrin-mediated endocytosis"/>
</dbReference>
<dbReference type="Reactome" id="R-RNO-8863795">
    <property type="pathway name" value="Downregulation of ERBB2 signaling"/>
</dbReference>
<dbReference type="Reactome" id="R-RNO-8866427">
    <property type="pathway name" value="VLDLR internalisation and degradation"/>
</dbReference>
<dbReference type="Reactome" id="R-RNO-8866652">
    <property type="pathway name" value="Synthesis of active ubiquitin: roles of E1 and E2 enzymes"/>
</dbReference>
<dbReference type="Reactome" id="R-RNO-8866654">
    <property type="pathway name" value="E3 ubiquitin ligases ubiquitinate target proteins"/>
</dbReference>
<dbReference type="Reactome" id="R-RNO-8939236">
    <property type="pathway name" value="RUNX1 regulates transcription of genes involved in differentiation of HSCs"/>
</dbReference>
<dbReference type="Reactome" id="R-RNO-8941858">
    <property type="pathway name" value="Regulation of RUNX3 expression and activity"/>
</dbReference>
<dbReference type="Reactome" id="R-RNO-8948747">
    <property type="pathway name" value="Regulation of PTEN localization"/>
</dbReference>
<dbReference type="Reactome" id="R-RNO-8948751">
    <property type="pathway name" value="Regulation of PTEN stability and activity"/>
</dbReference>
<dbReference type="Reactome" id="R-RNO-8951664">
    <property type="pathway name" value="Neddylation"/>
</dbReference>
<dbReference type="Reactome" id="R-RNO-901032">
    <property type="pathway name" value="ER Quality Control Compartment (ERQC)"/>
</dbReference>
<dbReference type="Reactome" id="R-RNO-9013507">
    <property type="pathway name" value="NOTCH3 Activation and Transmission of Signal to the Nucleus"/>
</dbReference>
<dbReference type="Reactome" id="R-RNO-9020702">
    <property type="pathway name" value="Interleukin-1 signaling"/>
</dbReference>
<dbReference type="Reactome" id="R-RNO-9033241">
    <property type="pathway name" value="Peroxisomal protein import"/>
</dbReference>
<dbReference type="Reactome" id="R-RNO-909733">
    <property type="pathway name" value="Interferon alpha/beta signaling"/>
</dbReference>
<dbReference type="Reactome" id="R-RNO-912631">
    <property type="pathway name" value="Regulation of signaling by CBL"/>
</dbReference>
<dbReference type="Reactome" id="R-RNO-917729">
    <property type="pathway name" value="Endosomal Sorting Complex Required For Transport (ESCRT)"/>
</dbReference>
<dbReference type="Reactome" id="R-RNO-917937">
    <property type="pathway name" value="Iron uptake and transport"/>
</dbReference>
<dbReference type="Reactome" id="R-RNO-936440">
    <property type="pathway name" value="Negative regulators of DDX58/IFIH1 signaling"/>
</dbReference>
<dbReference type="Reactome" id="R-RNO-936964">
    <property type="pathway name" value="Activation of IRF3, IRF7 mediated by TBK1, IKKEpsilon (IKBKE)"/>
</dbReference>
<dbReference type="Reactome" id="R-RNO-937041">
    <property type="pathway name" value="IKK complex recruitment mediated by RIP1"/>
</dbReference>
<dbReference type="Reactome" id="R-RNO-937042">
    <property type="pathway name" value="IRAK2 mediated activation of TAK1 complex"/>
</dbReference>
<dbReference type="Reactome" id="R-RNO-937072">
    <property type="pathway name" value="TRAF6-mediated induction of TAK1 complex within TLR4 complex"/>
</dbReference>
<dbReference type="Reactome" id="R-RNO-9645460">
    <property type="pathway name" value="Alpha-protein kinase 1 signaling pathway"/>
</dbReference>
<dbReference type="Reactome" id="R-RNO-9646399">
    <property type="pathway name" value="Aggrephagy"/>
</dbReference>
<dbReference type="Reactome" id="R-RNO-9648002">
    <property type="pathway name" value="RAS processing"/>
</dbReference>
<dbReference type="Reactome" id="R-RNO-9664873">
    <property type="pathway name" value="Pexophagy"/>
</dbReference>
<dbReference type="Reactome" id="R-RNO-9705462">
    <property type="pathway name" value="Inactivation of CSF3 (G-CSF) signaling"/>
</dbReference>
<dbReference type="Reactome" id="R-RNO-975163">
    <property type="pathway name" value="IRAK2 mediated activation of TAK1 complex upon TLR7/8 or 9 stimulation"/>
</dbReference>
<dbReference type="Reactome" id="R-RNO-9755511">
    <property type="pathway name" value="KEAP1-NFE2L2 pathway"/>
</dbReference>
<dbReference type="Reactome" id="R-RNO-9758274">
    <property type="pathway name" value="Regulation of NF-kappa B signaling"/>
</dbReference>
<dbReference type="Reactome" id="R-RNO-9762114">
    <property type="pathway name" value="GSK3B and BTRC:CUL1-mediated-degradation of NFE2L2"/>
</dbReference>
<dbReference type="Reactome" id="R-RNO-9824878">
    <property type="pathway name" value="Regulation of TBK1, IKKEpsilon (IKBKE)-mediated activation of IRF3, IRF7"/>
</dbReference>
<dbReference type="Reactome" id="R-RNO-983168">
    <property type="pathway name" value="Antigen processing: Ubiquitination &amp; Proteasome degradation"/>
</dbReference>
<dbReference type="Reactome" id="R-RNO-9861718">
    <property type="pathway name" value="Regulation of pyruvate metabolism"/>
</dbReference>
<dbReference type="PRO" id="PR:P0CG51"/>
<dbReference type="Proteomes" id="UP000002494">
    <property type="component" value="Unplaced"/>
</dbReference>
<dbReference type="GO" id="GO:0005737">
    <property type="term" value="C:cytoplasm"/>
    <property type="evidence" value="ECO:0000318"/>
    <property type="project" value="GO_Central"/>
</dbReference>
<dbReference type="GO" id="GO:0005741">
    <property type="term" value="C:mitochondrial outer membrane"/>
    <property type="evidence" value="ECO:0007669"/>
    <property type="project" value="UniProtKB-SubCell"/>
</dbReference>
<dbReference type="GO" id="GO:0005739">
    <property type="term" value="C:mitochondrion"/>
    <property type="evidence" value="ECO:0000266"/>
    <property type="project" value="RGD"/>
</dbReference>
<dbReference type="GO" id="GO:0043005">
    <property type="term" value="C:neuron projection"/>
    <property type="evidence" value="ECO:0000266"/>
    <property type="project" value="RGD"/>
</dbReference>
<dbReference type="GO" id="GO:0043025">
    <property type="term" value="C:neuronal cell body"/>
    <property type="evidence" value="ECO:0000266"/>
    <property type="project" value="RGD"/>
</dbReference>
<dbReference type="GO" id="GO:0005634">
    <property type="term" value="C:nucleus"/>
    <property type="evidence" value="ECO:0000318"/>
    <property type="project" value="GO_Central"/>
</dbReference>
<dbReference type="GO" id="GO:0031386">
    <property type="term" value="F:protein tag activity"/>
    <property type="evidence" value="ECO:0000318"/>
    <property type="project" value="GO_Central"/>
</dbReference>
<dbReference type="GO" id="GO:0031625">
    <property type="term" value="F:ubiquitin protein ligase binding"/>
    <property type="evidence" value="ECO:0000318"/>
    <property type="project" value="GO_Central"/>
</dbReference>
<dbReference type="GO" id="GO:0060612">
    <property type="term" value="P:adipose tissue development"/>
    <property type="evidence" value="ECO:0000266"/>
    <property type="project" value="RGD"/>
</dbReference>
<dbReference type="GO" id="GO:0097009">
    <property type="term" value="P:energy homeostasis"/>
    <property type="evidence" value="ECO:0000266"/>
    <property type="project" value="RGD"/>
</dbReference>
<dbReference type="GO" id="GO:0060613">
    <property type="term" value="P:fat pad development"/>
    <property type="evidence" value="ECO:0000266"/>
    <property type="project" value="RGD"/>
</dbReference>
<dbReference type="GO" id="GO:0008585">
    <property type="term" value="P:female gonad development"/>
    <property type="evidence" value="ECO:0000266"/>
    <property type="project" value="RGD"/>
</dbReference>
<dbReference type="GO" id="GO:0007144">
    <property type="term" value="P:female meiosis I"/>
    <property type="evidence" value="ECO:0000266"/>
    <property type="project" value="RGD"/>
</dbReference>
<dbReference type="GO" id="GO:0021888">
    <property type="term" value="P:hypothalamus gonadotrophin-releasing hormone neuron development"/>
    <property type="evidence" value="ECO:0000266"/>
    <property type="project" value="RGD"/>
</dbReference>
<dbReference type="GO" id="GO:0008584">
    <property type="term" value="P:male gonad development"/>
    <property type="evidence" value="ECO:0000266"/>
    <property type="project" value="RGD"/>
</dbReference>
<dbReference type="GO" id="GO:0007141">
    <property type="term" value="P:male meiosis I"/>
    <property type="evidence" value="ECO:0000266"/>
    <property type="project" value="RGD"/>
</dbReference>
<dbReference type="GO" id="GO:0047497">
    <property type="term" value="P:mitochondrion transport along microtubule"/>
    <property type="evidence" value="ECO:0000266"/>
    <property type="project" value="RGD"/>
</dbReference>
<dbReference type="GO" id="GO:0019941">
    <property type="term" value="P:modification-dependent protein catabolic process"/>
    <property type="evidence" value="ECO:0000318"/>
    <property type="project" value="GO_Central"/>
</dbReference>
<dbReference type="GO" id="GO:0048812">
    <property type="term" value="P:neuron projection morphogenesis"/>
    <property type="evidence" value="ECO:0000266"/>
    <property type="project" value="RGD"/>
</dbReference>
<dbReference type="GO" id="GO:1902255">
    <property type="term" value="P:positive regulation of intrinsic apoptotic signaling pathway by p53 class mediator"/>
    <property type="evidence" value="ECO:0000266"/>
    <property type="project" value="RGD"/>
</dbReference>
<dbReference type="GO" id="GO:1902527">
    <property type="term" value="P:positive regulation of protein monoubiquitination"/>
    <property type="evidence" value="ECO:0000266"/>
    <property type="project" value="RGD"/>
</dbReference>
<dbReference type="GO" id="GO:0031398">
    <property type="term" value="P:positive regulation of protein ubiquitination"/>
    <property type="evidence" value="ECO:0000266"/>
    <property type="project" value="RGD"/>
</dbReference>
<dbReference type="GO" id="GO:0016567">
    <property type="term" value="P:protein ubiquitination"/>
    <property type="evidence" value="ECO:0000318"/>
    <property type="project" value="GO_Central"/>
</dbReference>
<dbReference type="GO" id="GO:0051881">
    <property type="term" value="P:regulation of mitochondrial membrane potential"/>
    <property type="evidence" value="ECO:0000266"/>
    <property type="project" value="RGD"/>
</dbReference>
<dbReference type="GO" id="GO:0043523">
    <property type="term" value="P:regulation of neuron apoptotic process"/>
    <property type="evidence" value="ECO:0000266"/>
    <property type="project" value="RGD"/>
</dbReference>
<dbReference type="GO" id="GO:0061136">
    <property type="term" value="P:regulation of proteasomal protein catabolic process"/>
    <property type="evidence" value="ECO:0000266"/>
    <property type="project" value="RGD"/>
</dbReference>
<dbReference type="GO" id="GO:0072520">
    <property type="term" value="P:seminiferous tubule development"/>
    <property type="evidence" value="ECO:0000266"/>
    <property type="project" value="RGD"/>
</dbReference>
<dbReference type="CDD" id="cd01803">
    <property type="entry name" value="Ubl_ubiquitin"/>
    <property type="match status" value="4"/>
</dbReference>
<dbReference type="FunFam" id="3.10.20.90:FF:000158">
    <property type="entry name" value="Polyubiquitin 5"/>
    <property type="match status" value="4"/>
</dbReference>
<dbReference type="Gene3D" id="3.10.20.90">
    <property type="entry name" value="Phosphatidylinositol 3-kinase Catalytic Subunit, Chain A, domain 1"/>
    <property type="match status" value="4"/>
</dbReference>
<dbReference type="InterPro" id="IPR000626">
    <property type="entry name" value="Ubiquitin-like_dom"/>
</dbReference>
<dbReference type="InterPro" id="IPR029071">
    <property type="entry name" value="Ubiquitin-like_domsf"/>
</dbReference>
<dbReference type="InterPro" id="IPR019954">
    <property type="entry name" value="Ubiquitin_CS"/>
</dbReference>
<dbReference type="InterPro" id="IPR019956">
    <property type="entry name" value="Ubiquitin_dom"/>
</dbReference>
<dbReference type="InterPro" id="IPR050158">
    <property type="entry name" value="Ubiquitin_ubiquitin-like"/>
</dbReference>
<dbReference type="PANTHER" id="PTHR10666">
    <property type="entry name" value="UBIQUITIN"/>
    <property type="match status" value="1"/>
</dbReference>
<dbReference type="Pfam" id="PF00240">
    <property type="entry name" value="ubiquitin"/>
    <property type="match status" value="4"/>
</dbReference>
<dbReference type="PRINTS" id="PR00348">
    <property type="entry name" value="UBIQUITIN"/>
</dbReference>
<dbReference type="SMART" id="SM00213">
    <property type="entry name" value="UBQ"/>
    <property type="match status" value="4"/>
</dbReference>
<dbReference type="SUPFAM" id="SSF54236">
    <property type="entry name" value="Ubiquitin-like"/>
    <property type="match status" value="4"/>
</dbReference>
<dbReference type="PROSITE" id="PS00299">
    <property type="entry name" value="UBIQUITIN_1"/>
    <property type="match status" value="4"/>
</dbReference>
<dbReference type="PROSITE" id="PS50053">
    <property type="entry name" value="UBIQUITIN_2"/>
    <property type="match status" value="4"/>
</dbReference>
<comment type="function">
    <molecule>Ubiquitin</molecule>
    <text evidence="2">Exists either covalently attached to another protein, or free (unanchored). When covalently bound, it is conjugated to target proteins via an isopeptide bond either as a monomer (monoubiquitin), a polymer linked via different Lys residues of the ubiquitin (polyubiquitin chains) or a linear polymer linked via the initiator Met of the ubiquitin (linear polyubiquitin chains). Polyubiquitin chains, when attached to a target protein, have different functions depending on the Lys residue of the ubiquitin that is linked: Lys-6-linked may be involved in DNA repair; Lys-11-linked is involved in ERAD (endoplasmic reticulum-associated degradation) and in cell-cycle regulation; Lys-29-linked is involved in proteotoxic stress response and cell cycle; Lys-33-linked is involved in kinase modification; Lys-48-linked is involved in protein degradation via the proteasome; Lys-63-linked is involved in endocytosis, DNA-damage responses as well as in signaling processes leading to activation of the transcription factor NF-kappa-B. Linear polymer chains formed via attachment by the initiator Met lead to cell signaling. Ubiquitin is usually conjugated to Lys residues of target proteins, however, in rare cases, conjugation to Cys or Ser residues has been observed. When polyubiquitin is free (unanchored-polyubiquitin), it also has distinct roles, such as in activation of protein kinases, and in signaling.</text>
</comment>
<comment type="subunit">
    <text evidence="2">Interacts with SKP1-KMD2A and SKP1-KMD2B complexes.</text>
</comment>
<comment type="subcellular location">
    <molecule>Ubiquitin</molecule>
    <subcellularLocation>
        <location evidence="1">Cytoplasm</location>
    </subcellularLocation>
    <subcellularLocation>
        <location evidence="1">Nucleus</location>
    </subcellularLocation>
    <subcellularLocation>
        <location evidence="2">Mitochondrion outer membrane</location>
        <topology evidence="2">Peripheral membrane protein</topology>
    </subcellularLocation>
</comment>
<comment type="PTM">
    <molecule>Ubiquitin</molecule>
    <text evidence="2 4">Phosphorylated at Ser-65 by PINK1 during mitophagy (PubMed:29475881). Phosphorylated ubiquitin specifically binds and activates parkin (PRKN), triggering mitophagy (By similarity). Phosphorylation does not affect E1-mediated E2 charging of ubiquitin but affects discharging of E2 enzymes to form polyubiquitin chains (By similarity). It also affects deubiquitination by deubiquitinase enzymes such as USP30 (By similarity).</text>
</comment>
<comment type="PTM">
    <molecule>Ubiquitin</molecule>
    <text evidence="2">Mono-ADP-ribosylated at the C-terminus by PARP9, a component of the PPAR9-DTX3L complex. ADP-ribosylation requires processing by E1 and E2 enzymes and prevents ubiquitin conjugation to substrates such as histones.</text>
</comment>
<comment type="miscellaneous">
    <text>Ubiquitin is encoded by 4 different genes. Uba52 and Rps27a genes code for a single copy of ubiquitin fused to the ribosomal proteins eL40 and eS31, respectively. UBB and UBC genes code for a polyubiquitin precursor with exact head to tail repeats, the number of repeats differ between species and strains.</text>
</comment>
<comment type="miscellaneous">
    <text>For the sake of clarity sequence features are annotated only for the first chain, and are not repeated for each of the following chains.</text>
</comment>
<comment type="similarity">
    <text evidence="5">Belongs to the ubiquitin family.</text>
</comment>
<evidence type="ECO:0000250" key="1"/>
<evidence type="ECO:0000250" key="2">
    <source>
        <dbReference type="UniProtKB" id="P0CG47"/>
    </source>
</evidence>
<evidence type="ECO:0000255" key="3">
    <source>
        <dbReference type="PROSITE-ProRule" id="PRU00214"/>
    </source>
</evidence>
<evidence type="ECO:0000269" key="4">
    <source>
    </source>
</evidence>
<evidence type="ECO:0000305" key="5"/>
<gene>
    <name type="primary">Ubb</name>
</gene>
<feature type="chain" id="PRO_0000114806" description="Ubiquitin">
    <location>
        <begin position="1"/>
        <end position="76"/>
    </location>
</feature>
<feature type="chain" id="PRO_0000396238" description="Ubiquitin">
    <location>
        <begin position="77"/>
        <end position="152"/>
    </location>
</feature>
<feature type="chain" id="PRO_0000396239" description="Ubiquitin">
    <location>
        <begin position="153"/>
        <end position="228"/>
    </location>
</feature>
<feature type="chain" id="PRO_0000396240" description="Ubiquitin">
    <location>
        <begin position="229"/>
        <end position="304"/>
    </location>
</feature>
<feature type="propeptide" id="PRO_0000396241">
    <location>
        <position position="305"/>
    </location>
</feature>
<feature type="domain" description="Ubiquitin-like 1" evidence="3">
    <location>
        <begin position="1"/>
        <end position="76"/>
    </location>
</feature>
<feature type="domain" description="Ubiquitin-like 2" evidence="3">
    <location>
        <begin position="77"/>
        <end position="152"/>
    </location>
</feature>
<feature type="domain" description="Ubiquitin-like 3" evidence="3">
    <location>
        <begin position="153"/>
        <end position="228"/>
    </location>
</feature>
<feature type="domain" description="Ubiquitin-like 4" evidence="3">
    <location>
        <begin position="229"/>
        <end position="304"/>
    </location>
</feature>
<feature type="site" description="Interacts with activating enzyme">
    <location>
        <position position="54"/>
    </location>
</feature>
<feature type="site" description="Essential for function">
    <location>
        <position position="68"/>
    </location>
</feature>
<feature type="site" description="Interacts with activating enzyme">
    <location>
        <position position="72"/>
    </location>
</feature>
<feature type="modified residue" description="Phosphoserine; by PINK1" evidence="4">
    <location>
        <position position="65"/>
    </location>
</feature>
<feature type="modified residue" description="ADP-ribosylglycine" evidence="2">
    <location>
        <position position="76"/>
    </location>
</feature>
<feature type="modified residue" description="Phosphoserine" evidence="2">
    <location>
        <position position="141"/>
    </location>
</feature>
<feature type="cross-link" description="Glycyl lysine isopeptide (Lys-Gly) (interchain with G-Cter in ubiquitin)">
    <location>
        <position position="48"/>
    </location>
</feature>
<feature type="cross-link" description="Glycyl lysine isopeptide (Gly-Lys) (interchain with K-? in acceptor proteins)">
    <location>
        <position position="76"/>
    </location>
</feature>
<feature type="cross-link" description="Glycyl lysine isopeptide (Lys-Gly) (interchain with G-Cter in ubiquitin)" evidence="2">
    <location>
        <position position="82"/>
    </location>
</feature>
<feature type="cross-link" description="Glycyl lysine isopeptide (Lys-Gly) (interchain with G-Cter in ubiquitin)" evidence="2">
    <location>
        <position position="87"/>
    </location>
</feature>
<feature type="cross-link" description="Glycyl lysine isopeptide (Lys-Gly) (interchain with G-Cter in ubiquitin)" evidence="2">
    <location>
        <position position="103"/>
    </location>
</feature>
<feature type="cross-link" description="Glycyl lysine isopeptide (Lys-Gly) (interchain with G-Cter in ubiquitin)" evidence="2">
    <location>
        <position position="105"/>
    </location>
</feature>
<feature type="cross-link" description="Glycyl lysine isopeptide (Lys-Gly) (interchain with G-Cter in ubiquitin)" evidence="2">
    <location>
        <position position="124"/>
    </location>
</feature>
<feature type="cross-link" description="Glycyl lysine isopeptide (Lys-Gly) (interchain with G-Cter in ubiquitin)" evidence="2">
    <location>
        <position position="139"/>
    </location>
</feature>
<feature type="mutagenesis site" description="Rate of phosphorylation by an insect Pink1 is very slightly increased." evidence="4">
    <original>L</original>
    <variation>N</variation>
    <location>
        <position position="8"/>
    </location>
</feature>
<feature type="mutagenesis site" description="Rate of phosphorylation by an insect Pink1 is slightly decreased." evidence="4">
    <original>Q</original>
    <variation>E</variation>
    <location>
        <position position="49"/>
    </location>
</feature>
<feature type="mutagenesis site" description="Rate of phosphorylation by an insect Pink1 is very slightly increased." evidence="4">
    <original>K</original>
    <variation>Q</variation>
    <location>
        <position position="63"/>
    </location>
</feature>
<feature type="mutagenesis site" description="Rate of phosphorylation by an insect Pink1 is increased." evidence="4">
    <original>E</original>
    <variation>Q</variation>
    <location>
        <position position="64"/>
    </location>
</feature>
<keyword id="KW-0013">ADP-ribosylation</keyword>
<keyword id="KW-0963">Cytoplasm</keyword>
<keyword id="KW-0903">Direct protein sequencing</keyword>
<keyword id="KW-1017">Isopeptide bond</keyword>
<keyword id="KW-0472">Membrane</keyword>
<keyword id="KW-0496">Mitochondrion</keyword>
<keyword id="KW-1000">Mitochondrion outer membrane</keyword>
<keyword id="KW-0539">Nucleus</keyword>
<keyword id="KW-0597">Phosphoprotein</keyword>
<keyword id="KW-1185">Reference proteome</keyword>
<keyword id="KW-0677">Repeat</keyword>
<keyword id="KW-0832">Ubl conjugation</keyword>
<sequence length="305" mass="34369">MQIFVKTLTGKTITLEVEPSDTIENVKAKIQDKEGIPPDQQRLIFAGKQLEDGRTLSDYNIQKESTLHLVLRLRGGMQIFVKTLTGKTITLEVEPSDTIENVKAKIQDKEGIPPDQQRLIFAGKQLEDGRTLSDYNIQKESTLHLVLRLRGGMQIFVKTLTGKTITLEVEPSDTIENVKAKIQDKEGIPPDQQRLIFAGKQLEDGRTLSDYNIQKESTLHLVLRLRGGMQIFVKTLTGKTITLEVEPSDTIENVKAKIQDKEGIPPDQQRLIFAGKQLEDGRTLSDYNIQKESTLHLVLRLRGGY</sequence>
<name>UBB_RAT</name>
<protein>
    <recommendedName>
        <fullName>Polyubiquitin-B</fullName>
    </recommendedName>
    <component>
        <recommendedName>
            <fullName>Ubiquitin</fullName>
        </recommendedName>
    </component>
</protein>
<proteinExistence type="evidence at protein level"/>
<organism>
    <name type="scientific">Rattus norvegicus</name>
    <name type="common">Rat</name>
    <dbReference type="NCBI Taxonomy" id="10116"/>
    <lineage>
        <taxon>Eukaryota</taxon>
        <taxon>Metazoa</taxon>
        <taxon>Chordata</taxon>
        <taxon>Craniata</taxon>
        <taxon>Vertebrata</taxon>
        <taxon>Euteleostomi</taxon>
        <taxon>Mammalia</taxon>
        <taxon>Eutheria</taxon>
        <taxon>Euarchontoglires</taxon>
        <taxon>Glires</taxon>
        <taxon>Rodentia</taxon>
        <taxon>Myomorpha</taxon>
        <taxon>Muroidea</taxon>
        <taxon>Muridae</taxon>
        <taxon>Murinae</taxon>
        <taxon>Rattus</taxon>
    </lineage>
</organism>
<reference key="1">
    <citation type="journal article" date="1994" name="Biochim. Biophys. Acta">
        <title>Nucleotide sequence and expression of the rat polyubiquitin mRNA.</title>
        <authorList>
            <person name="Hayashi T."/>
            <person name="Noga M."/>
            <person name="Matsuda M."/>
        </authorList>
    </citation>
    <scope>NUCLEOTIDE SEQUENCE [MRNA]</scope>
    <source>
        <strain>Wistar</strain>
        <tissue>Brain cortex</tissue>
        <tissue>Hippocampus</tissue>
    </source>
</reference>
<reference key="2">
    <citation type="journal article" date="2004" name="Genome Res.">
        <title>The status, quality, and expansion of the NIH full-length cDNA project: the Mammalian Gene Collection (MGC).</title>
        <authorList>
            <consortium name="The MGC Project Team"/>
        </authorList>
    </citation>
    <scope>NUCLEOTIDE SEQUENCE [LARGE SCALE MRNA]</scope>
    <source>
        <tissue>Heart</tissue>
        <tissue>Pituitary</tissue>
    </source>
</reference>
<reference key="3">
    <citation type="journal article" date="1994" name="Biochim. Biophys. Acta">
        <title>Differential feeding-related regulation of ubiquitin and calbindin9kDa in rat duodenum.</title>
        <authorList>
            <person name="Hubbard M.J."/>
            <person name="Carne A."/>
        </authorList>
    </citation>
    <scope>PROTEIN SEQUENCE OF 1-76</scope>
    <source>
        <strain>Wistar</strain>
        <tissue>Duodenum</tissue>
    </source>
</reference>
<reference key="4">
    <citation type="submission" date="2007-07" db="UniProtKB">
        <authorList>
            <person name="Lubec G."/>
            <person name="Diao W."/>
            <person name="Kang S.U."/>
        </authorList>
    </citation>
    <scope>PROTEIN SEQUENCE OF 30-42 AND 55-72</scope>
    <scope>IDENTIFICATION BY MASS SPECTROMETRY</scope>
    <source>
        <strain>Sprague-Dawley</strain>
        <tissue>Brain</tissue>
        <tissue>Hippocampus</tissue>
    </source>
</reference>
<reference key="5">
    <citation type="journal article" date="2018" name="EMBO Rep.">
        <title>PINK1 autophosphorylation is required for ubiquitin recognition.</title>
        <authorList>
            <person name="Rasool S."/>
            <person name="Soya N."/>
            <person name="Truong L."/>
            <person name="Croteau N."/>
            <person name="Lukacs G.L."/>
            <person name="Trempe J.F."/>
        </authorList>
    </citation>
    <scope>PHOSPHORYLATION AT SER-65</scope>
    <scope>MUTAGENESIS OF LEU-8; GLN-49; LYS-63 AND GLU-64</scope>
</reference>
<accession>P0CG51</accession>
<accession>P02248</accession>
<accession>P02249</accession>
<accession>P02250</accession>
<accession>P62989</accession>
<accession>Q29120</accession>
<accession>Q63446</accession>
<accession>Q91887</accession>
<accession>Q91888</accession>